<gene>
    <name type="primary">rbcL</name>
</gene>
<dbReference type="EC" id="4.1.1.39"/>
<dbReference type="EMBL" id="X69730">
    <property type="protein sequence ID" value="CAA49385.1"/>
    <property type="molecule type" value="Genomic_DNA"/>
</dbReference>
<dbReference type="PIR" id="S31543">
    <property type="entry name" value="S31543"/>
</dbReference>
<dbReference type="GO" id="GO:0009507">
    <property type="term" value="C:chloroplast"/>
    <property type="evidence" value="ECO:0007669"/>
    <property type="project" value="UniProtKB-SubCell"/>
</dbReference>
<dbReference type="GO" id="GO:0004497">
    <property type="term" value="F:monooxygenase activity"/>
    <property type="evidence" value="ECO:0007669"/>
    <property type="project" value="UniProtKB-KW"/>
</dbReference>
<dbReference type="GO" id="GO:0016984">
    <property type="term" value="F:ribulose-bisphosphate carboxylase activity"/>
    <property type="evidence" value="ECO:0007669"/>
    <property type="project" value="UniProtKB-EC"/>
</dbReference>
<dbReference type="GO" id="GO:0009853">
    <property type="term" value="P:photorespiration"/>
    <property type="evidence" value="ECO:0007669"/>
    <property type="project" value="UniProtKB-KW"/>
</dbReference>
<dbReference type="GO" id="GO:0019253">
    <property type="term" value="P:reductive pentose-phosphate cycle"/>
    <property type="evidence" value="ECO:0007669"/>
    <property type="project" value="UniProtKB-KW"/>
</dbReference>
<dbReference type="Gene3D" id="3.30.70.150">
    <property type="entry name" value="RuBisCO large subunit, N-terminal domain"/>
    <property type="match status" value="1"/>
</dbReference>
<dbReference type="InterPro" id="IPR033966">
    <property type="entry name" value="RuBisCO"/>
</dbReference>
<dbReference type="InterPro" id="IPR017443">
    <property type="entry name" value="RuBisCO_lsu_fd_N"/>
</dbReference>
<dbReference type="InterPro" id="IPR036422">
    <property type="entry name" value="RuBisCO_lsu_N_sf"/>
</dbReference>
<dbReference type="PANTHER" id="PTHR42704">
    <property type="entry name" value="RIBULOSE BISPHOSPHATE CARBOXYLASE"/>
    <property type="match status" value="1"/>
</dbReference>
<dbReference type="PANTHER" id="PTHR42704:SF15">
    <property type="entry name" value="RIBULOSE BISPHOSPHATE CARBOXYLASE LARGE CHAIN"/>
    <property type="match status" value="1"/>
</dbReference>
<dbReference type="Pfam" id="PF02788">
    <property type="entry name" value="RuBisCO_large_N"/>
    <property type="match status" value="1"/>
</dbReference>
<dbReference type="SUPFAM" id="SSF54966">
    <property type="entry name" value="RuBisCO, large subunit, small (N-terminal) domain"/>
    <property type="match status" value="1"/>
</dbReference>
<protein>
    <recommendedName>
        <fullName>Ribulose bisphosphate carboxylase large chain</fullName>
        <shortName>RuBisCO large subunit</shortName>
        <ecNumber>4.1.1.39</ecNumber>
    </recommendedName>
</protein>
<organism>
    <name type="scientific">Colletia hystrix</name>
    <name type="common">Crucifixion thorn</name>
    <name type="synonym">Colletia armata</name>
    <dbReference type="NCBI Taxonomy" id="262928"/>
    <lineage>
        <taxon>Eukaryota</taxon>
        <taxon>Viridiplantae</taxon>
        <taxon>Streptophyta</taxon>
        <taxon>Embryophyta</taxon>
        <taxon>Tracheophyta</taxon>
        <taxon>Spermatophyta</taxon>
        <taxon>Magnoliopsida</taxon>
        <taxon>eudicotyledons</taxon>
        <taxon>Gunneridae</taxon>
        <taxon>Pentapetalae</taxon>
        <taxon>rosids</taxon>
        <taxon>fabids</taxon>
        <taxon>Rosales</taxon>
        <taxon>Rhamnaceae</taxon>
        <taxon>Colletieae</taxon>
        <taxon>Colletia</taxon>
    </lineage>
</organism>
<reference key="1">
    <citation type="journal article" date="1994" name="Mol. Phylogenet. Evol.">
        <title>Molecular phylogeny of families related to Celastrales based on rbcL 5' flanking sequences.</title>
        <authorList>
            <person name="Savolainen V."/>
            <person name="Manen J.F."/>
            <person name="Douzery E.J.P."/>
            <person name="Spichiger R."/>
        </authorList>
    </citation>
    <scope>NUCLEOTIDE SEQUENCE [GENOMIC DNA]</scope>
    <source>
        <strain>Sample CAR6</strain>
    </source>
</reference>
<geneLocation type="chloroplast"/>
<evidence type="ECO:0000250" key="1"/>
<evidence type="ECO:0000305" key="2"/>
<sequence length="54" mass="5979">MSPQTETKASVGFKAGVKDYKLTYYTPDYETKDTDILAAFRVTPQXXVPPEEAG</sequence>
<proteinExistence type="inferred from homology"/>
<name>RBL_COLHS</name>
<keyword id="KW-0007">Acetylation</keyword>
<keyword id="KW-0113">Calvin cycle</keyword>
<keyword id="KW-0120">Carbon dioxide fixation</keyword>
<keyword id="KW-0150">Chloroplast</keyword>
<keyword id="KW-0456">Lyase</keyword>
<keyword id="KW-0488">Methylation</keyword>
<keyword id="KW-0503">Monooxygenase</keyword>
<keyword id="KW-0560">Oxidoreductase</keyword>
<keyword id="KW-0601">Photorespiration</keyword>
<keyword id="KW-0602">Photosynthesis</keyword>
<keyword id="KW-0934">Plastid</keyword>
<comment type="function">
    <text evidence="1">RuBisCO catalyzes two reactions: the carboxylation of D-ribulose 1,5-bisphosphate, the primary event in carbon dioxide fixation, as well as the oxidative fragmentation of the pentose substrate in the photorespiration process. Both reactions occur simultaneously and in competition at the same active site (By similarity).</text>
</comment>
<comment type="catalytic activity">
    <reaction>
        <text>2 (2R)-3-phosphoglycerate + 2 H(+) = D-ribulose 1,5-bisphosphate + CO2 + H2O</text>
        <dbReference type="Rhea" id="RHEA:23124"/>
        <dbReference type="ChEBI" id="CHEBI:15377"/>
        <dbReference type="ChEBI" id="CHEBI:15378"/>
        <dbReference type="ChEBI" id="CHEBI:16526"/>
        <dbReference type="ChEBI" id="CHEBI:57870"/>
        <dbReference type="ChEBI" id="CHEBI:58272"/>
        <dbReference type="EC" id="4.1.1.39"/>
    </reaction>
</comment>
<comment type="catalytic activity">
    <reaction>
        <text>D-ribulose 1,5-bisphosphate + O2 = 2-phosphoglycolate + (2R)-3-phosphoglycerate + 2 H(+)</text>
        <dbReference type="Rhea" id="RHEA:36631"/>
        <dbReference type="ChEBI" id="CHEBI:15378"/>
        <dbReference type="ChEBI" id="CHEBI:15379"/>
        <dbReference type="ChEBI" id="CHEBI:57870"/>
        <dbReference type="ChEBI" id="CHEBI:58033"/>
        <dbReference type="ChEBI" id="CHEBI:58272"/>
    </reaction>
</comment>
<comment type="subunit">
    <text evidence="1">Heterohexadecamer of 8 large chains and 8 small chains.</text>
</comment>
<comment type="subcellular location">
    <subcellularLocation>
        <location>Plastid</location>
        <location>Chloroplast</location>
    </subcellularLocation>
</comment>
<comment type="miscellaneous">
    <text evidence="1">The basic functional RuBisCO is composed of a large chain homodimer in a 'head-to-tail' conformation. In form I RuBisCO this homodimer is arranged in a barrel-like tetramer with the small subunits forming a tetrameric 'cap' on each end of the 'barrel' (By similarity).</text>
</comment>
<comment type="similarity">
    <text evidence="2">Belongs to the RuBisCO large chain family. Type I subfamily.</text>
</comment>
<feature type="propeptide" id="PRO_0000031183" evidence="1">
    <location>
        <begin position="1"/>
        <end position="2"/>
    </location>
</feature>
<feature type="chain" id="PRO_0000031184" description="Ribulose bisphosphate carboxylase large chain">
    <location>
        <begin position="3"/>
        <end position="54" status="greater than"/>
    </location>
</feature>
<feature type="modified residue" description="N-acetylproline" evidence="1">
    <location>
        <position position="3"/>
    </location>
</feature>
<feature type="modified residue" description="N6,N6,N6-trimethyllysine" evidence="1">
    <location>
        <position position="14"/>
    </location>
</feature>
<feature type="non-terminal residue">
    <location>
        <position position="54"/>
    </location>
</feature>
<accession>P31182</accession>